<dbReference type="EC" id="3.4.21.92" evidence="1"/>
<dbReference type="EMBL" id="AE016958">
    <property type="protein sequence ID" value="AAS04598.1"/>
    <property type="molecule type" value="Genomic_DNA"/>
</dbReference>
<dbReference type="SMR" id="Q73XM8"/>
<dbReference type="STRING" id="262316.MAP_2281c"/>
<dbReference type="MEROPS" id="S14.008"/>
<dbReference type="KEGG" id="mpa:MAP_2281c"/>
<dbReference type="eggNOG" id="COG0740">
    <property type="taxonomic scope" value="Bacteria"/>
</dbReference>
<dbReference type="HOGENOM" id="CLU_058707_3_2_11"/>
<dbReference type="BRENDA" id="3.4.21.92">
    <property type="organism ID" value="3508"/>
</dbReference>
<dbReference type="Proteomes" id="UP000000580">
    <property type="component" value="Chromosome"/>
</dbReference>
<dbReference type="GO" id="GO:0005737">
    <property type="term" value="C:cytoplasm"/>
    <property type="evidence" value="ECO:0007669"/>
    <property type="project" value="UniProtKB-SubCell"/>
</dbReference>
<dbReference type="GO" id="GO:0009368">
    <property type="term" value="C:endopeptidase Clp complex"/>
    <property type="evidence" value="ECO:0007669"/>
    <property type="project" value="TreeGrafter"/>
</dbReference>
<dbReference type="GO" id="GO:0004176">
    <property type="term" value="F:ATP-dependent peptidase activity"/>
    <property type="evidence" value="ECO:0007669"/>
    <property type="project" value="InterPro"/>
</dbReference>
<dbReference type="GO" id="GO:0051117">
    <property type="term" value="F:ATPase binding"/>
    <property type="evidence" value="ECO:0007669"/>
    <property type="project" value="TreeGrafter"/>
</dbReference>
<dbReference type="GO" id="GO:0004252">
    <property type="term" value="F:serine-type endopeptidase activity"/>
    <property type="evidence" value="ECO:0007669"/>
    <property type="project" value="UniProtKB-UniRule"/>
</dbReference>
<dbReference type="GO" id="GO:0006515">
    <property type="term" value="P:protein quality control for misfolded or incompletely synthesized proteins"/>
    <property type="evidence" value="ECO:0007669"/>
    <property type="project" value="TreeGrafter"/>
</dbReference>
<dbReference type="CDD" id="cd07017">
    <property type="entry name" value="S14_ClpP_2"/>
    <property type="match status" value="1"/>
</dbReference>
<dbReference type="FunFam" id="3.90.226.10:FF:000002">
    <property type="entry name" value="ATP-dependent Clp protease proteolytic subunit"/>
    <property type="match status" value="1"/>
</dbReference>
<dbReference type="Gene3D" id="3.90.226.10">
    <property type="entry name" value="2-enoyl-CoA Hydratase, Chain A, domain 1"/>
    <property type="match status" value="1"/>
</dbReference>
<dbReference type="HAMAP" id="MF_00444">
    <property type="entry name" value="ClpP"/>
    <property type="match status" value="1"/>
</dbReference>
<dbReference type="InterPro" id="IPR001907">
    <property type="entry name" value="ClpP"/>
</dbReference>
<dbReference type="InterPro" id="IPR029045">
    <property type="entry name" value="ClpP/crotonase-like_dom_sf"/>
</dbReference>
<dbReference type="InterPro" id="IPR023562">
    <property type="entry name" value="ClpP/TepA"/>
</dbReference>
<dbReference type="InterPro" id="IPR033135">
    <property type="entry name" value="ClpP_His_AS"/>
</dbReference>
<dbReference type="NCBIfam" id="NF001368">
    <property type="entry name" value="PRK00277.1"/>
    <property type="match status" value="1"/>
</dbReference>
<dbReference type="NCBIfam" id="NF009205">
    <property type="entry name" value="PRK12553.1"/>
    <property type="match status" value="1"/>
</dbReference>
<dbReference type="PANTHER" id="PTHR10381">
    <property type="entry name" value="ATP-DEPENDENT CLP PROTEASE PROTEOLYTIC SUBUNIT"/>
    <property type="match status" value="1"/>
</dbReference>
<dbReference type="PANTHER" id="PTHR10381:SF70">
    <property type="entry name" value="ATP-DEPENDENT CLP PROTEASE PROTEOLYTIC SUBUNIT"/>
    <property type="match status" value="1"/>
</dbReference>
<dbReference type="Pfam" id="PF00574">
    <property type="entry name" value="CLP_protease"/>
    <property type="match status" value="1"/>
</dbReference>
<dbReference type="PRINTS" id="PR00127">
    <property type="entry name" value="CLPPROTEASEP"/>
</dbReference>
<dbReference type="SUPFAM" id="SSF52096">
    <property type="entry name" value="ClpP/crotonase"/>
    <property type="match status" value="1"/>
</dbReference>
<dbReference type="PROSITE" id="PS00382">
    <property type="entry name" value="CLP_PROTEASE_HIS"/>
    <property type="match status" value="1"/>
</dbReference>
<feature type="chain" id="PRO_0000179595" description="ATP-dependent Clp protease proteolytic subunit 2">
    <location>
        <begin position="1"/>
        <end position="199"/>
    </location>
</feature>
<feature type="active site" description="Nucleophile" evidence="1">
    <location>
        <position position="95"/>
    </location>
</feature>
<feature type="active site" evidence="1">
    <location>
        <position position="120"/>
    </location>
</feature>
<organism>
    <name type="scientific">Mycolicibacterium paratuberculosis (strain ATCC BAA-968 / K-10)</name>
    <name type="common">Mycobacterium paratuberculosis</name>
    <dbReference type="NCBI Taxonomy" id="262316"/>
    <lineage>
        <taxon>Bacteria</taxon>
        <taxon>Bacillati</taxon>
        <taxon>Actinomycetota</taxon>
        <taxon>Actinomycetes</taxon>
        <taxon>Mycobacteriales</taxon>
        <taxon>Mycobacteriaceae</taxon>
        <taxon>Mycobacterium</taxon>
        <taxon>Mycobacterium avium complex (MAC)</taxon>
    </lineage>
</organism>
<reference key="1">
    <citation type="journal article" date="2005" name="Proc. Natl. Acad. Sci. U.S.A.">
        <title>The complete genome sequence of Mycobacterium avium subspecies paratuberculosis.</title>
        <authorList>
            <person name="Li L."/>
            <person name="Bannantine J.P."/>
            <person name="Zhang Q."/>
            <person name="Amonsin A."/>
            <person name="May B.J."/>
            <person name="Alt D."/>
            <person name="Banerji N."/>
            <person name="Kanjilal S."/>
            <person name="Kapur V."/>
        </authorList>
    </citation>
    <scope>NUCLEOTIDE SEQUENCE [LARGE SCALE GENOMIC DNA]</scope>
    <source>
        <strain>ATCC BAA-968 / K-10</strain>
    </source>
</reference>
<evidence type="ECO:0000255" key="1">
    <source>
        <dbReference type="HAMAP-Rule" id="MF_00444"/>
    </source>
</evidence>
<name>CLPP2_MYCPA</name>
<keyword id="KW-0963">Cytoplasm</keyword>
<keyword id="KW-0378">Hydrolase</keyword>
<keyword id="KW-0645">Protease</keyword>
<keyword id="KW-1185">Reference proteome</keyword>
<keyword id="KW-0720">Serine protease</keyword>
<protein>
    <recommendedName>
        <fullName evidence="1">ATP-dependent Clp protease proteolytic subunit 2</fullName>
        <ecNumber evidence="1">3.4.21.92</ecNumber>
    </recommendedName>
    <alternativeName>
        <fullName evidence="1">Endopeptidase Clp 2</fullName>
    </alternativeName>
</protein>
<sequence>MSDMRSPSQGLNLTDSVYERLLSERIIFLGSEVNDDVANRLCAQILLLAAEDPTKDISLYINSPGGSISAGMAIYDTMVLAPCDIATYAMGMAASMGEFLLAAGTKGKRYALPHARILMHQPLGGVTGSAADIAIQAEQFHVIKKEMFRLNAEFTGQSIERIEADSDRDRWFTAQEALEYGFVDHIITRAATITNGEAQ</sequence>
<proteinExistence type="inferred from homology"/>
<comment type="function">
    <text evidence="1">Cleaves peptides in various proteins in a process that requires ATP hydrolysis. Has a chymotrypsin-like activity. Plays a major role in the degradation of misfolded proteins.</text>
</comment>
<comment type="catalytic activity">
    <reaction evidence="1">
        <text>Hydrolysis of proteins to small peptides in the presence of ATP and magnesium. alpha-casein is the usual test substrate. In the absence of ATP, only oligopeptides shorter than five residues are hydrolyzed (such as succinyl-Leu-Tyr-|-NHMec, and Leu-Tyr-Leu-|-Tyr-Trp, in which cleavage of the -Tyr-|-Leu- and -Tyr-|-Trp bonds also occurs).</text>
        <dbReference type="EC" id="3.4.21.92"/>
    </reaction>
</comment>
<comment type="subunit">
    <text evidence="1">Fourteen ClpP subunits assemble into 2 heptameric rings which stack back to back to give a disk-like structure with a central cavity, resembling the structure of eukaryotic proteasomes.</text>
</comment>
<comment type="subcellular location">
    <subcellularLocation>
        <location evidence="1">Cytoplasm</location>
    </subcellularLocation>
</comment>
<comment type="similarity">
    <text evidence="1">Belongs to the peptidase S14 family.</text>
</comment>
<gene>
    <name evidence="1" type="primary">clpP2</name>
    <name type="ordered locus">MAP_2281c</name>
</gene>
<accession>Q73XM8</accession>